<reference key="1">
    <citation type="journal article" date="2000" name="Nature">
        <title>DNA sequence of both chromosomes of the cholera pathogen Vibrio cholerae.</title>
        <authorList>
            <person name="Heidelberg J.F."/>
            <person name="Eisen J.A."/>
            <person name="Nelson W.C."/>
            <person name="Clayton R.A."/>
            <person name="Gwinn M.L."/>
            <person name="Dodson R.J."/>
            <person name="Haft D.H."/>
            <person name="Hickey E.K."/>
            <person name="Peterson J.D."/>
            <person name="Umayam L.A."/>
            <person name="Gill S.R."/>
            <person name="Nelson K.E."/>
            <person name="Read T.D."/>
            <person name="Tettelin H."/>
            <person name="Richardson D.L."/>
            <person name="Ermolaeva M.D."/>
            <person name="Vamathevan J.J."/>
            <person name="Bass S."/>
            <person name="Qin H."/>
            <person name="Dragoi I."/>
            <person name="Sellers P."/>
            <person name="McDonald L.A."/>
            <person name="Utterback T.R."/>
            <person name="Fleischmann R.D."/>
            <person name="Nierman W.C."/>
            <person name="White O."/>
            <person name="Salzberg S.L."/>
            <person name="Smith H.O."/>
            <person name="Colwell R.R."/>
            <person name="Mekalanos J.J."/>
            <person name="Venter J.C."/>
            <person name="Fraser C.M."/>
        </authorList>
    </citation>
    <scope>NUCLEOTIDE SEQUENCE [LARGE SCALE GENOMIC DNA]</scope>
    <source>
        <strain>ATCC 39315 / El Tor Inaba N16961</strain>
    </source>
</reference>
<feature type="chain" id="PRO_0000148484" description="Dihydroorotate dehydrogenase (quinone)">
    <location>
        <begin position="1"/>
        <end position="336"/>
    </location>
</feature>
<feature type="active site" description="Nucleophile" evidence="1">
    <location>
        <position position="175"/>
    </location>
</feature>
<feature type="binding site" evidence="1">
    <location>
        <begin position="62"/>
        <end position="66"/>
    </location>
    <ligand>
        <name>FMN</name>
        <dbReference type="ChEBI" id="CHEBI:58210"/>
    </ligand>
</feature>
<feature type="binding site" evidence="1">
    <location>
        <position position="66"/>
    </location>
    <ligand>
        <name>substrate</name>
    </ligand>
</feature>
<feature type="binding site" evidence="1">
    <location>
        <position position="86"/>
    </location>
    <ligand>
        <name>FMN</name>
        <dbReference type="ChEBI" id="CHEBI:58210"/>
    </ligand>
</feature>
<feature type="binding site" evidence="1">
    <location>
        <begin position="111"/>
        <end position="115"/>
    </location>
    <ligand>
        <name>substrate</name>
    </ligand>
</feature>
<feature type="binding site" evidence="1">
    <location>
        <position position="139"/>
    </location>
    <ligand>
        <name>FMN</name>
        <dbReference type="ChEBI" id="CHEBI:58210"/>
    </ligand>
</feature>
<feature type="binding site" evidence="1">
    <location>
        <position position="172"/>
    </location>
    <ligand>
        <name>FMN</name>
        <dbReference type="ChEBI" id="CHEBI:58210"/>
    </ligand>
</feature>
<feature type="binding site" evidence="1">
    <location>
        <position position="172"/>
    </location>
    <ligand>
        <name>substrate</name>
    </ligand>
</feature>
<feature type="binding site" evidence="1">
    <location>
        <position position="177"/>
    </location>
    <ligand>
        <name>substrate</name>
    </ligand>
</feature>
<feature type="binding site" evidence="1">
    <location>
        <position position="217"/>
    </location>
    <ligand>
        <name>FMN</name>
        <dbReference type="ChEBI" id="CHEBI:58210"/>
    </ligand>
</feature>
<feature type="binding site" evidence="1">
    <location>
        <position position="245"/>
    </location>
    <ligand>
        <name>FMN</name>
        <dbReference type="ChEBI" id="CHEBI:58210"/>
    </ligand>
</feature>
<feature type="binding site" evidence="1">
    <location>
        <begin position="246"/>
        <end position="247"/>
    </location>
    <ligand>
        <name>substrate</name>
    </ligand>
</feature>
<feature type="binding site" evidence="1">
    <location>
        <position position="268"/>
    </location>
    <ligand>
        <name>FMN</name>
        <dbReference type="ChEBI" id="CHEBI:58210"/>
    </ligand>
</feature>
<feature type="binding site" evidence="1">
    <location>
        <position position="297"/>
    </location>
    <ligand>
        <name>FMN</name>
        <dbReference type="ChEBI" id="CHEBI:58210"/>
    </ligand>
</feature>
<feature type="binding site" evidence="1">
    <location>
        <begin position="318"/>
        <end position="319"/>
    </location>
    <ligand>
        <name>FMN</name>
        <dbReference type="ChEBI" id="CHEBI:58210"/>
    </ligand>
</feature>
<protein>
    <recommendedName>
        <fullName evidence="1">Dihydroorotate dehydrogenase (quinone)</fullName>
        <ecNumber evidence="1">1.3.5.2</ecNumber>
    </recommendedName>
    <alternativeName>
        <fullName evidence="1">DHOdehase</fullName>
        <shortName evidence="1">DHOD</shortName>
        <shortName evidence="1">DHODase</shortName>
    </alternativeName>
    <alternativeName>
        <fullName evidence="1">Dihydroorotate oxidase</fullName>
    </alternativeName>
</protein>
<keyword id="KW-1003">Cell membrane</keyword>
<keyword id="KW-0285">Flavoprotein</keyword>
<keyword id="KW-0288">FMN</keyword>
<keyword id="KW-0472">Membrane</keyword>
<keyword id="KW-0560">Oxidoreductase</keyword>
<keyword id="KW-0665">Pyrimidine biosynthesis</keyword>
<keyword id="KW-1185">Reference proteome</keyword>
<organism>
    <name type="scientific">Vibrio cholerae serotype O1 (strain ATCC 39315 / El Tor Inaba N16961)</name>
    <dbReference type="NCBI Taxonomy" id="243277"/>
    <lineage>
        <taxon>Bacteria</taxon>
        <taxon>Pseudomonadati</taxon>
        <taxon>Pseudomonadota</taxon>
        <taxon>Gammaproteobacteria</taxon>
        <taxon>Vibrionales</taxon>
        <taxon>Vibrionaceae</taxon>
        <taxon>Vibrio</taxon>
    </lineage>
</organism>
<dbReference type="EC" id="1.3.5.2" evidence="1"/>
<dbReference type="EMBL" id="AE003852">
    <property type="protein sequence ID" value="AAF94646.1"/>
    <property type="molecule type" value="Genomic_DNA"/>
</dbReference>
<dbReference type="PIR" id="D82193">
    <property type="entry name" value="D82193"/>
</dbReference>
<dbReference type="RefSeq" id="NP_231132.1">
    <property type="nucleotide sequence ID" value="NC_002505.1"/>
</dbReference>
<dbReference type="RefSeq" id="WP_000966885.1">
    <property type="nucleotide sequence ID" value="NZ_LT906614.1"/>
</dbReference>
<dbReference type="SMR" id="Q9KRZ2"/>
<dbReference type="STRING" id="243277.VC_1491"/>
<dbReference type="DNASU" id="2613997"/>
<dbReference type="EnsemblBacteria" id="AAF94646">
    <property type="protein sequence ID" value="AAF94646"/>
    <property type="gene ID" value="VC_1491"/>
</dbReference>
<dbReference type="KEGG" id="vch:VC_1491"/>
<dbReference type="PATRIC" id="fig|243277.26.peg.1418"/>
<dbReference type="eggNOG" id="COG0167">
    <property type="taxonomic scope" value="Bacteria"/>
</dbReference>
<dbReference type="HOGENOM" id="CLU_013640_2_0_6"/>
<dbReference type="UniPathway" id="UPA00070">
    <property type="reaction ID" value="UER00946"/>
</dbReference>
<dbReference type="Proteomes" id="UP000000584">
    <property type="component" value="Chromosome 1"/>
</dbReference>
<dbReference type="GO" id="GO:0005737">
    <property type="term" value="C:cytoplasm"/>
    <property type="evidence" value="ECO:0007669"/>
    <property type="project" value="InterPro"/>
</dbReference>
<dbReference type="GO" id="GO:0005886">
    <property type="term" value="C:plasma membrane"/>
    <property type="evidence" value="ECO:0007669"/>
    <property type="project" value="UniProtKB-SubCell"/>
</dbReference>
<dbReference type="GO" id="GO:0106430">
    <property type="term" value="F:dihydroorotate dehydrogenase (quinone) activity"/>
    <property type="evidence" value="ECO:0007669"/>
    <property type="project" value="UniProtKB-EC"/>
</dbReference>
<dbReference type="GO" id="GO:0004152">
    <property type="term" value="F:dihydroorotate dehydrogenase activity"/>
    <property type="evidence" value="ECO:0000318"/>
    <property type="project" value="GO_Central"/>
</dbReference>
<dbReference type="GO" id="GO:0006207">
    <property type="term" value="P:'de novo' pyrimidine nucleobase biosynthetic process"/>
    <property type="evidence" value="ECO:0000318"/>
    <property type="project" value="GO_Central"/>
</dbReference>
<dbReference type="GO" id="GO:0044205">
    <property type="term" value="P:'de novo' UMP biosynthetic process"/>
    <property type="evidence" value="ECO:0007669"/>
    <property type="project" value="UniProtKB-UniRule"/>
</dbReference>
<dbReference type="GO" id="GO:0009220">
    <property type="term" value="P:pyrimidine ribonucleotide biosynthetic process"/>
    <property type="evidence" value="ECO:0000318"/>
    <property type="project" value="GO_Central"/>
</dbReference>
<dbReference type="CDD" id="cd04738">
    <property type="entry name" value="DHOD_2_like"/>
    <property type="match status" value="1"/>
</dbReference>
<dbReference type="FunFam" id="3.20.20.70:FF:000028">
    <property type="entry name" value="Dihydroorotate dehydrogenase (quinone)"/>
    <property type="match status" value="1"/>
</dbReference>
<dbReference type="Gene3D" id="3.20.20.70">
    <property type="entry name" value="Aldolase class I"/>
    <property type="match status" value="1"/>
</dbReference>
<dbReference type="HAMAP" id="MF_00225">
    <property type="entry name" value="DHO_dh_type2"/>
    <property type="match status" value="1"/>
</dbReference>
<dbReference type="InterPro" id="IPR013785">
    <property type="entry name" value="Aldolase_TIM"/>
</dbReference>
<dbReference type="InterPro" id="IPR050074">
    <property type="entry name" value="DHO_dehydrogenase"/>
</dbReference>
<dbReference type="InterPro" id="IPR012135">
    <property type="entry name" value="Dihydroorotate_DH_1_2"/>
</dbReference>
<dbReference type="InterPro" id="IPR005719">
    <property type="entry name" value="Dihydroorotate_DH_2"/>
</dbReference>
<dbReference type="InterPro" id="IPR005720">
    <property type="entry name" value="Dihydroorotate_DH_cat"/>
</dbReference>
<dbReference type="InterPro" id="IPR001295">
    <property type="entry name" value="Dihydroorotate_DH_CS"/>
</dbReference>
<dbReference type="NCBIfam" id="NF003644">
    <property type="entry name" value="PRK05286.1-1"/>
    <property type="match status" value="1"/>
</dbReference>
<dbReference type="NCBIfam" id="NF003645">
    <property type="entry name" value="PRK05286.1-2"/>
    <property type="match status" value="1"/>
</dbReference>
<dbReference type="NCBIfam" id="NF003646">
    <property type="entry name" value="PRK05286.1-4"/>
    <property type="match status" value="1"/>
</dbReference>
<dbReference type="NCBIfam" id="NF003652">
    <property type="entry name" value="PRK05286.2-5"/>
    <property type="match status" value="1"/>
</dbReference>
<dbReference type="NCBIfam" id="TIGR01036">
    <property type="entry name" value="pyrD_sub2"/>
    <property type="match status" value="1"/>
</dbReference>
<dbReference type="PANTHER" id="PTHR48109:SF4">
    <property type="entry name" value="DIHYDROOROTATE DEHYDROGENASE (QUINONE), MITOCHONDRIAL"/>
    <property type="match status" value="1"/>
</dbReference>
<dbReference type="PANTHER" id="PTHR48109">
    <property type="entry name" value="DIHYDROOROTATE DEHYDROGENASE (QUINONE), MITOCHONDRIAL-RELATED"/>
    <property type="match status" value="1"/>
</dbReference>
<dbReference type="Pfam" id="PF01180">
    <property type="entry name" value="DHO_dh"/>
    <property type="match status" value="1"/>
</dbReference>
<dbReference type="PIRSF" id="PIRSF000164">
    <property type="entry name" value="DHO_oxidase"/>
    <property type="match status" value="1"/>
</dbReference>
<dbReference type="SUPFAM" id="SSF51395">
    <property type="entry name" value="FMN-linked oxidoreductases"/>
    <property type="match status" value="1"/>
</dbReference>
<dbReference type="PROSITE" id="PS00911">
    <property type="entry name" value="DHODEHASE_1"/>
    <property type="match status" value="1"/>
</dbReference>
<dbReference type="PROSITE" id="PS00912">
    <property type="entry name" value="DHODEHASE_2"/>
    <property type="match status" value="1"/>
</dbReference>
<accession>Q9KRZ2</accession>
<proteinExistence type="inferred from homology"/>
<comment type="function">
    <text evidence="1">Catalyzes the conversion of dihydroorotate to orotate with quinone as electron acceptor.</text>
</comment>
<comment type="catalytic activity">
    <reaction evidence="1">
        <text>(S)-dihydroorotate + a quinone = orotate + a quinol</text>
        <dbReference type="Rhea" id="RHEA:30187"/>
        <dbReference type="ChEBI" id="CHEBI:24646"/>
        <dbReference type="ChEBI" id="CHEBI:30839"/>
        <dbReference type="ChEBI" id="CHEBI:30864"/>
        <dbReference type="ChEBI" id="CHEBI:132124"/>
        <dbReference type="EC" id="1.3.5.2"/>
    </reaction>
</comment>
<comment type="cofactor">
    <cofactor evidence="1">
        <name>FMN</name>
        <dbReference type="ChEBI" id="CHEBI:58210"/>
    </cofactor>
    <text evidence="1">Binds 1 FMN per subunit.</text>
</comment>
<comment type="pathway">
    <text evidence="1">Pyrimidine metabolism; UMP biosynthesis via de novo pathway; orotate from (S)-dihydroorotate (quinone route): step 1/1.</text>
</comment>
<comment type="subunit">
    <text evidence="1">Monomer.</text>
</comment>
<comment type="subcellular location">
    <subcellularLocation>
        <location evidence="1">Cell membrane</location>
        <topology evidence="1">Peripheral membrane protein</topology>
    </subcellularLocation>
</comment>
<comment type="similarity">
    <text evidence="1">Belongs to the dihydroorotate dehydrogenase family. Type 2 subfamily.</text>
</comment>
<name>PYRD_VIBCH</name>
<gene>
    <name evidence="1" type="primary">pyrD</name>
    <name type="ordered locus">VC_1491</name>
</gene>
<sequence>MLYRLARAGFFQLDAEKAHDLAISNFKRFTGTPFDLFYRQQLPHRPVQCMGLTFKNPVGLAAGLDKNGECIEAFGAMGFGFVEVGTVTPRPQAGNDKPRLFRLVHAEGIINRMGFNNLGVDHLVENVKRAKYDGIIGINIGKNKDTPIEKGAEDYLICMDKVYPYAGYIAVNISSPNTPGLRSLQYGEALDELLAALKTRQAELAAKHDKYVPLALKIAPDLSDDEIQQICQSLLKNKIDSVIATNTTLDRSLVEGMKFANEAGGLSGRPLQNRSTEVIKCLYKELGEEIPIIGVGGIDSYISAKEKLLAGAKLVQVYSGFIYQGPGLVADIVKNL</sequence>
<evidence type="ECO:0000255" key="1">
    <source>
        <dbReference type="HAMAP-Rule" id="MF_00225"/>
    </source>
</evidence>